<comment type="function">
    <text evidence="1 6">Substrate of protein kinase PTK6 (By similarity). May play a regulatory role in the acute-phase response in systemic inflammation and may modulate STAT3 activity.</text>
</comment>
<comment type="subunit">
    <text evidence="6">Interacts with PTK6 and CSF1R.</text>
</comment>
<comment type="subcellular location">
    <subcellularLocation>
        <location evidence="6">Cytoplasm</location>
    </subcellularLocation>
    <subcellularLocation>
        <location evidence="6">Membrane</location>
        <topology evidence="6">Peripheral membrane protein</topology>
    </subcellularLocation>
    <text>The translocation to the membranes occurs in response to EGF when the protein is overexpressed in fibroblastic cells.</text>
</comment>
<comment type="alternative products">
    <event type="alternative splicing"/>
    <isoform>
        <id>Q8R0L1-1</id>
        <name>1</name>
        <sequence type="displayed"/>
    </isoform>
    <isoform>
        <id>Q8R0L1-2</id>
        <name>2</name>
        <sequence type="described" ref="VSP_013401 VSP_013402"/>
    </isoform>
</comment>
<comment type="tissue specificity">
    <text evidence="6">Widely expressed.</text>
</comment>
<comment type="PTM">
    <text evidence="1">Phosphorylated on tyrosine. Phosphorylated by PTK6 at Tyr-250 modulates PTK6-mediated STAT3 activation.</text>
</comment>
<gene>
    <name type="primary">Stap2</name>
</gene>
<sequence length="411" mass="45802">MATALSPPRGPKLKGAPPSHYYESFLEKKGPCDQDYRKFWAGLQGLAICFYNSNRDLQPLEKLDLRLFSKLRDEALLGSSRDTAYHFSLVLRDQEVKFKVESLESCEMWKGFILTVVELRVPSNLTLLPGHLYMMAEVLTKEEVRRAAEVPWCFLQVSRLEAQLLLERYPECGNLLLRPGGDGKDSVSVTTRQILNGSPVVKHYKVKRAGSKYVIDVEDPFSCPSLEAVVNYFVTHTKRALVPFLLDEDYEKVLGFVDSDRENGESAWAVPSFRASGPALPANVLKPLPPVPVSVSSQEDKLPQLPPLPQLPDTDENYVTPIEDSPAAEYMNQDVSLSSQAVPLKPKKPARLPAKPPKPSVVPKPDLKAITSVWTRKLGGSSSQASSLVTRLGDITAELEEKLQKRRALEH</sequence>
<reference key="1">
    <citation type="journal article" date="2003" name="J. Biol. Chem.">
        <title>STAP-2/BKS, an adaptor/docking protein, modulates STAT3 activation in acute-phase response through its YXXQ motif.</title>
        <authorList>
            <person name="Minoguchi M."/>
            <person name="Minoguchi S."/>
            <person name="Aki D."/>
            <person name="Joo A."/>
            <person name="Yamamoto T."/>
            <person name="Yumioka T."/>
            <person name="Matsuda T."/>
            <person name="Yoshimura A."/>
        </authorList>
    </citation>
    <scope>NUCLEOTIDE SEQUENCE [MRNA] (ISOFORM 1)</scope>
    <scope>INTERACTION WITH CSF1R</scope>
    <scope>FUNCTION</scope>
    <scope>TISSUE SPECIFICITY</scope>
    <scope>PHOSPHORYLATION</scope>
    <scope>SUBCELLULAR LOCATION</scope>
    <source>
        <tissue>Fetal liver</tissue>
    </source>
</reference>
<reference key="2">
    <citation type="journal article" date="2005" name="Science">
        <title>The transcriptional landscape of the mammalian genome.</title>
        <authorList>
            <person name="Carninci P."/>
            <person name="Kasukawa T."/>
            <person name="Katayama S."/>
            <person name="Gough J."/>
            <person name="Frith M.C."/>
            <person name="Maeda N."/>
            <person name="Oyama R."/>
            <person name="Ravasi T."/>
            <person name="Lenhard B."/>
            <person name="Wells C."/>
            <person name="Kodzius R."/>
            <person name="Shimokawa K."/>
            <person name="Bajic V.B."/>
            <person name="Brenner S.E."/>
            <person name="Batalov S."/>
            <person name="Forrest A.R."/>
            <person name="Zavolan M."/>
            <person name="Davis M.J."/>
            <person name="Wilming L.G."/>
            <person name="Aidinis V."/>
            <person name="Allen J.E."/>
            <person name="Ambesi-Impiombato A."/>
            <person name="Apweiler R."/>
            <person name="Aturaliya R.N."/>
            <person name="Bailey T.L."/>
            <person name="Bansal M."/>
            <person name="Baxter L."/>
            <person name="Beisel K.W."/>
            <person name="Bersano T."/>
            <person name="Bono H."/>
            <person name="Chalk A.M."/>
            <person name="Chiu K.P."/>
            <person name="Choudhary V."/>
            <person name="Christoffels A."/>
            <person name="Clutterbuck D.R."/>
            <person name="Crowe M.L."/>
            <person name="Dalla E."/>
            <person name="Dalrymple B.P."/>
            <person name="de Bono B."/>
            <person name="Della Gatta G."/>
            <person name="di Bernardo D."/>
            <person name="Down T."/>
            <person name="Engstrom P."/>
            <person name="Fagiolini M."/>
            <person name="Faulkner G."/>
            <person name="Fletcher C.F."/>
            <person name="Fukushima T."/>
            <person name="Furuno M."/>
            <person name="Futaki S."/>
            <person name="Gariboldi M."/>
            <person name="Georgii-Hemming P."/>
            <person name="Gingeras T.R."/>
            <person name="Gojobori T."/>
            <person name="Green R.E."/>
            <person name="Gustincich S."/>
            <person name="Harbers M."/>
            <person name="Hayashi Y."/>
            <person name="Hensch T.K."/>
            <person name="Hirokawa N."/>
            <person name="Hill D."/>
            <person name="Huminiecki L."/>
            <person name="Iacono M."/>
            <person name="Ikeo K."/>
            <person name="Iwama A."/>
            <person name="Ishikawa T."/>
            <person name="Jakt M."/>
            <person name="Kanapin A."/>
            <person name="Katoh M."/>
            <person name="Kawasawa Y."/>
            <person name="Kelso J."/>
            <person name="Kitamura H."/>
            <person name="Kitano H."/>
            <person name="Kollias G."/>
            <person name="Krishnan S.P."/>
            <person name="Kruger A."/>
            <person name="Kummerfeld S.K."/>
            <person name="Kurochkin I.V."/>
            <person name="Lareau L.F."/>
            <person name="Lazarevic D."/>
            <person name="Lipovich L."/>
            <person name="Liu J."/>
            <person name="Liuni S."/>
            <person name="McWilliam S."/>
            <person name="Madan Babu M."/>
            <person name="Madera M."/>
            <person name="Marchionni L."/>
            <person name="Matsuda H."/>
            <person name="Matsuzawa S."/>
            <person name="Miki H."/>
            <person name="Mignone F."/>
            <person name="Miyake S."/>
            <person name="Morris K."/>
            <person name="Mottagui-Tabar S."/>
            <person name="Mulder N."/>
            <person name="Nakano N."/>
            <person name="Nakauchi H."/>
            <person name="Ng P."/>
            <person name="Nilsson R."/>
            <person name="Nishiguchi S."/>
            <person name="Nishikawa S."/>
            <person name="Nori F."/>
            <person name="Ohara O."/>
            <person name="Okazaki Y."/>
            <person name="Orlando V."/>
            <person name="Pang K.C."/>
            <person name="Pavan W.J."/>
            <person name="Pavesi G."/>
            <person name="Pesole G."/>
            <person name="Petrovsky N."/>
            <person name="Piazza S."/>
            <person name="Reed J."/>
            <person name="Reid J.F."/>
            <person name="Ring B.Z."/>
            <person name="Ringwald M."/>
            <person name="Rost B."/>
            <person name="Ruan Y."/>
            <person name="Salzberg S.L."/>
            <person name="Sandelin A."/>
            <person name="Schneider C."/>
            <person name="Schoenbach C."/>
            <person name="Sekiguchi K."/>
            <person name="Semple C.A."/>
            <person name="Seno S."/>
            <person name="Sessa L."/>
            <person name="Sheng Y."/>
            <person name="Shibata Y."/>
            <person name="Shimada H."/>
            <person name="Shimada K."/>
            <person name="Silva D."/>
            <person name="Sinclair B."/>
            <person name="Sperling S."/>
            <person name="Stupka E."/>
            <person name="Sugiura K."/>
            <person name="Sultana R."/>
            <person name="Takenaka Y."/>
            <person name="Taki K."/>
            <person name="Tammoja K."/>
            <person name="Tan S.L."/>
            <person name="Tang S."/>
            <person name="Taylor M.S."/>
            <person name="Tegner J."/>
            <person name="Teichmann S.A."/>
            <person name="Ueda H.R."/>
            <person name="van Nimwegen E."/>
            <person name="Verardo R."/>
            <person name="Wei C.L."/>
            <person name="Yagi K."/>
            <person name="Yamanishi H."/>
            <person name="Zabarovsky E."/>
            <person name="Zhu S."/>
            <person name="Zimmer A."/>
            <person name="Hide W."/>
            <person name="Bult C."/>
            <person name="Grimmond S.M."/>
            <person name="Teasdale R.D."/>
            <person name="Liu E.T."/>
            <person name="Brusic V."/>
            <person name="Quackenbush J."/>
            <person name="Wahlestedt C."/>
            <person name="Mattick J.S."/>
            <person name="Hume D.A."/>
            <person name="Kai C."/>
            <person name="Sasaki D."/>
            <person name="Tomaru Y."/>
            <person name="Fukuda S."/>
            <person name="Kanamori-Katayama M."/>
            <person name="Suzuki M."/>
            <person name="Aoki J."/>
            <person name="Arakawa T."/>
            <person name="Iida J."/>
            <person name="Imamura K."/>
            <person name="Itoh M."/>
            <person name="Kato T."/>
            <person name="Kawaji H."/>
            <person name="Kawagashira N."/>
            <person name="Kawashima T."/>
            <person name="Kojima M."/>
            <person name="Kondo S."/>
            <person name="Konno H."/>
            <person name="Nakano K."/>
            <person name="Ninomiya N."/>
            <person name="Nishio T."/>
            <person name="Okada M."/>
            <person name="Plessy C."/>
            <person name="Shibata K."/>
            <person name="Shiraki T."/>
            <person name="Suzuki S."/>
            <person name="Tagami M."/>
            <person name="Waki K."/>
            <person name="Watahiki A."/>
            <person name="Okamura-Oho Y."/>
            <person name="Suzuki H."/>
            <person name="Kawai J."/>
            <person name="Hayashizaki Y."/>
        </authorList>
    </citation>
    <scope>NUCLEOTIDE SEQUENCE [LARGE SCALE MRNA] (ISOFORM 2)</scope>
    <source>
        <strain>C57BL/6J</strain>
        <tissue>Liver</tissue>
    </source>
</reference>
<reference key="3">
    <citation type="journal article" date="2004" name="Genome Res.">
        <title>The status, quality, and expansion of the NIH full-length cDNA project: the Mammalian Gene Collection (MGC).</title>
        <authorList>
            <consortium name="The MGC Project Team"/>
        </authorList>
    </citation>
    <scope>NUCLEOTIDE SEQUENCE [LARGE SCALE MRNA] (ISOFORM 1)</scope>
    <source>
        <strain>FVB/N</strain>
        <tissue>Colon</tissue>
    </source>
</reference>
<name>STAP2_MOUSE</name>
<proteinExistence type="evidence at protein level"/>
<protein>
    <recommendedName>
        <fullName>Signal-transducing adaptor protein 2</fullName>
        <shortName>STAP-2</shortName>
    </recommendedName>
</protein>
<organism>
    <name type="scientific">Mus musculus</name>
    <name type="common">Mouse</name>
    <dbReference type="NCBI Taxonomy" id="10090"/>
    <lineage>
        <taxon>Eukaryota</taxon>
        <taxon>Metazoa</taxon>
        <taxon>Chordata</taxon>
        <taxon>Craniata</taxon>
        <taxon>Vertebrata</taxon>
        <taxon>Euteleostomi</taxon>
        <taxon>Mammalia</taxon>
        <taxon>Eutheria</taxon>
        <taxon>Euarchontoglires</taxon>
        <taxon>Glires</taxon>
        <taxon>Rodentia</taxon>
        <taxon>Myomorpha</taxon>
        <taxon>Muroidea</taxon>
        <taxon>Muridae</taxon>
        <taxon>Murinae</taxon>
        <taxon>Mus</taxon>
        <taxon>Mus</taxon>
    </lineage>
</organism>
<keyword id="KW-0025">Alternative splicing</keyword>
<keyword id="KW-0175">Coiled coil</keyword>
<keyword id="KW-0963">Cytoplasm</keyword>
<keyword id="KW-0472">Membrane</keyword>
<keyword id="KW-0597">Phosphoprotein</keyword>
<keyword id="KW-1185">Reference proteome</keyword>
<keyword id="KW-0727">SH2 domain</keyword>
<accession>Q8R0L1</accession>
<accession>Q8BWS2</accession>
<feature type="chain" id="PRO_0000072240" description="Signal-transducing adaptor protein 2">
    <location>
        <begin position="1"/>
        <end position="411"/>
    </location>
</feature>
<feature type="domain" description="PH">
    <location>
        <begin position="20"/>
        <end position="120"/>
    </location>
</feature>
<feature type="domain" description="SH2" evidence="4">
    <location>
        <begin position="152"/>
        <end position="248"/>
    </location>
</feature>
<feature type="region of interest" description="Disordered" evidence="5">
    <location>
        <begin position="291"/>
        <end position="320"/>
    </location>
</feature>
<feature type="region of interest" description="Disordered" evidence="5">
    <location>
        <begin position="338"/>
        <end position="364"/>
    </location>
</feature>
<feature type="coiled-coil region" evidence="3">
    <location>
        <begin position="390"/>
        <end position="410"/>
    </location>
</feature>
<feature type="modified residue" description="Phosphotyrosine" evidence="2">
    <location>
        <position position="22"/>
    </location>
</feature>
<feature type="modified residue" description="Phosphotyrosine; by PTK6" evidence="2">
    <location>
        <position position="250"/>
    </location>
</feature>
<feature type="modified residue" description="Phosphotyrosine" evidence="2">
    <location>
        <position position="318"/>
    </location>
</feature>
<feature type="modified residue" description="Phosphotyrosine" evidence="2">
    <location>
        <position position="330"/>
    </location>
</feature>
<feature type="splice variant" id="VSP_013401" description="In isoform 2." evidence="7">
    <original>FVDSDRENGESAWAVPS</original>
    <variation>VCDVGLPGLDRDTLSGG</variation>
    <location>
        <begin position="256"/>
        <end position="272"/>
    </location>
</feature>
<feature type="splice variant" id="VSP_013402" description="In isoform 2." evidence="7">
    <location>
        <begin position="273"/>
        <end position="411"/>
    </location>
</feature>
<dbReference type="EMBL" id="AK050131">
    <property type="protein sequence ID" value="BAC34083.1"/>
    <property type="molecule type" value="mRNA"/>
</dbReference>
<dbReference type="EMBL" id="AK050172">
    <property type="protein sequence ID" value="BAC34107.1"/>
    <property type="molecule type" value="mRNA"/>
</dbReference>
<dbReference type="EMBL" id="BC026642">
    <property type="protein sequence ID" value="AAH26642.1"/>
    <property type="molecule type" value="mRNA"/>
</dbReference>
<dbReference type="CCDS" id="CCDS28889.1">
    <molecule id="Q8R0L1-1"/>
</dbReference>
<dbReference type="RefSeq" id="NP_001397254.1">
    <molecule id="Q8R0L1-1"/>
    <property type="nucleotide sequence ID" value="NM_001410325.1"/>
</dbReference>
<dbReference type="RefSeq" id="NP_001419910.1">
    <molecule id="Q8R0L1-1"/>
    <property type="nucleotide sequence ID" value="NM_001432981.1"/>
</dbReference>
<dbReference type="RefSeq" id="NP_666046.1">
    <molecule id="Q8R0L1-1"/>
    <property type="nucleotide sequence ID" value="NM_145934.4"/>
</dbReference>
<dbReference type="RefSeq" id="XP_017172690.1">
    <property type="nucleotide sequence ID" value="XM_017317201.1"/>
</dbReference>
<dbReference type="SMR" id="Q8R0L1"/>
<dbReference type="BioGRID" id="223125">
    <property type="interactions" value="6"/>
</dbReference>
<dbReference type="FunCoup" id="Q8R0L1">
    <property type="interactions" value="931"/>
</dbReference>
<dbReference type="STRING" id="10090.ENSMUSP00000038130"/>
<dbReference type="iPTMnet" id="Q8R0L1"/>
<dbReference type="PhosphoSitePlus" id="Q8R0L1"/>
<dbReference type="PaxDb" id="10090-ENSMUSP00000038130"/>
<dbReference type="PeptideAtlas" id="Q8R0L1"/>
<dbReference type="ProteomicsDB" id="258638">
    <molecule id="Q8R0L1-1"/>
</dbReference>
<dbReference type="ProteomicsDB" id="258639">
    <molecule id="Q8R0L1-2"/>
</dbReference>
<dbReference type="Antibodypedia" id="1197">
    <property type="antibodies" value="300 antibodies from 34 providers"/>
</dbReference>
<dbReference type="DNASU" id="106766"/>
<dbReference type="Ensembl" id="ENSMUST00000043785.8">
    <molecule id="Q8R0L1-1"/>
    <property type="protein sequence ID" value="ENSMUSP00000038130.7"/>
    <property type="gene ID" value="ENSMUSG00000038781.8"/>
</dbReference>
<dbReference type="GeneID" id="106766"/>
<dbReference type="KEGG" id="mmu:106766"/>
<dbReference type="UCSC" id="uc008dao.3">
    <molecule id="Q8R0L1-1"/>
    <property type="organism name" value="mouse"/>
</dbReference>
<dbReference type="AGR" id="MGI:2147039"/>
<dbReference type="CTD" id="55620"/>
<dbReference type="MGI" id="MGI:2147039">
    <property type="gene designation" value="Stap2"/>
</dbReference>
<dbReference type="VEuPathDB" id="HostDB:ENSMUSG00000038781"/>
<dbReference type="eggNOG" id="ENOG502QURW">
    <property type="taxonomic scope" value="Eukaryota"/>
</dbReference>
<dbReference type="GeneTree" id="ENSGT00530000063841"/>
<dbReference type="HOGENOM" id="CLU_043957_0_0_1"/>
<dbReference type="InParanoid" id="Q8R0L1"/>
<dbReference type="OMA" id="SQLPPCY"/>
<dbReference type="OrthoDB" id="6086001at2759"/>
<dbReference type="PhylomeDB" id="Q8R0L1"/>
<dbReference type="TreeFam" id="TF332087"/>
<dbReference type="Reactome" id="R-MMU-8849474">
    <property type="pathway name" value="PTK6 Activates STAT3"/>
</dbReference>
<dbReference type="BioGRID-ORCS" id="106766">
    <property type="hits" value="1 hit in 76 CRISPR screens"/>
</dbReference>
<dbReference type="PRO" id="PR:Q8R0L1"/>
<dbReference type="Proteomes" id="UP000000589">
    <property type="component" value="Chromosome 17"/>
</dbReference>
<dbReference type="RNAct" id="Q8R0L1">
    <property type="molecule type" value="protein"/>
</dbReference>
<dbReference type="Bgee" id="ENSMUSG00000038781">
    <property type="expression patterns" value="Expressed in intestinal villus and 239 other cell types or tissues"/>
</dbReference>
<dbReference type="GO" id="GO:0005737">
    <property type="term" value="C:cytoplasm"/>
    <property type="evidence" value="ECO:0007669"/>
    <property type="project" value="UniProtKB-SubCell"/>
</dbReference>
<dbReference type="GO" id="GO:0005886">
    <property type="term" value="C:plasma membrane"/>
    <property type="evidence" value="ECO:0000314"/>
    <property type="project" value="MGI"/>
</dbReference>
<dbReference type="GO" id="GO:0035591">
    <property type="term" value="F:signaling adaptor activity"/>
    <property type="evidence" value="ECO:0007669"/>
    <property type="project" value="InterPro"/>
</dbReference>
<dbReference type="CDD" id="cd10404">
    <property type="entry name" value="SH2_STAP2"/>
    <property type="match status" value="1"/>
</dbReference>
<dbReference type="FunFam" id="2.30.29.30:FF:000527">
    <property type="entry name" value="Signal transducing adaptor family member 2"/>
    <property type="match status" value="1"/>
</dbReference>
<dbReference type="FunFam" id="3.30.505.10:FF:000076">
    <property type="entry name" value="Signal transducing adaptor family member 2"/>
    <property type="match status" value="1"/>
</dbReference>
<dbReference type="Gene3D" id="2.30.29.30">
    <property type="entry name" value="Pleckstrin-homology domain (PH domain)/Phosphotyrosine-binding domain (PTB)"/>
    <property type="match status" value="1"/>
</dbReference>
<dbReference type="Gene3D" id="3.30.505.10">
    <property type="entry name" value="SH2 domain"/>
    <property type="match status" value="1"/>
</dbReference>
<dbReference type="InterPro" id="IPR011993">
    <property type="entry name" value="PH-like_dom_sf"/>
</dbReference>
<dbReference type="InterPro" id="IPR001849">
    <property type="entry name" value="PH_domain"/>
</dbReference>
<dbReference type="InterPro" id="IPR000980">
    <property type="entry name" value="SH2"/>
</dbReference>
<dbReference type="InterPro" id="IPR036860">
    <property type="entry name" value="SH2_dom_sf"/>
</dbReference>
<dbReference type="InterPro" id="IPR039111">
    <property type="entry name" value="STAP1/STAP2"/>
</dbReference>
<dbReference type="InterPro" id="IPR035878">
    <property type="entry name" value="STAP2_SH2"/>
</dbReference>
<dbReference type="PANTHER" id="PTHR16186:SF11">
    <property type="entry name" value="SIGNAL-TRANSDUCING ADAPTOR PROTEIN 2"/>
    <property type="match status" value="1"/>
</dbReference>
<dbReference type="PANTHER" id="PTHR16186">
    <property type="entry name" value="SIGNAL-TRANSDUCING ADAPTOR PROTEIN-RELATED"/>
    <property type="match status" value="1"/>
</dbReference>
<dbReference type="SMART" id="SM00233">
    <property type="entry name" value="PH"/>
    <property type="match status" value="1"/>
</dbReference>
<dbReference type="SMART" id="SM00252">
    <property type="entry name" value="SH2"/>
    <property type="match status" value="1"/>
</dbReference>
<dbReference type="SUPFAM" id="SSF50729">
    <property type="entry name" value="PH domain-like"/>
    <property type="match status" value="1"/>
</dbReference>
<dbReference type="SUPFAM" id="SSF55550">
    <property type="entry name" value="SH2 domain"/>
    <property type="match status" value="1"/>
</dbReference>
<dbReference type="PROSITE" id="PS50001">
    <property type="entry name" value="SH2"/>
    <property type="match status" value="1"/>
</dbReference>
<evidence type="ECO:0000250" key="1"/>
<evidence type="ECO:0000250" key="2">
    <source>
        <dbReference type="UniProtKB" id="Q9UGK3"/>
    </source>
</evidence>
<evidence type="ECO:0000255" key="3"/>
<evidence type="ECO:0000255" key="4">
    <source>
        <dbReference type="PROSITE-ProRule" id="PRU00191"/>
    </source>
</evidence>
<evidence type="ECO:0000256" key="5">
    <source>
        <dbReference type="SAM" id="MobiDB-lite"/>
    </source>
</evidence>
<evidence type="ECO:0000269" key="6">
    <source>
    </source>
</evidence>
<evidence type="ECO:0000303" key="7">
    <source>
    </source>
</evidence>